<reference key="1">
    <citation type="journal article" date="2001" name="Lancet">
        <title>Whole genome sequencing of meticillin-resistant Staphylococcus aureus.</title>
        <authorList>
            <person name="Kuroda M."/>
            <person name="Ohta T."/>
            <person name="Uchiyama I."/>
            <person name="Baba T."/>
            <person name="Yuzawa H."/>
            <person name="Kobayashi I."/>
            <person name="Cui L."/>
            <person name="Oguchi A."/>
            <person name="Aoki K."/>
            <person name="Nagai Y."/>
            <person name="Lian J.-Q."/>
            <person name="Ito T."/>
            <person name="Kanamori M."/>
            <person name="Matsumaru H."/>
            <person name="Maruyama A."/>
            <person name="Murakami H."/>
            <person name="Hosoyama A."/>
            <person name="Mizutani-Ui Y."/>
            <person name="Takahashi N.K."/>
            <person name="Sawano T."/>
            <person name="Inoue R."/>
            <person name="Kaito C."/>
            <person name="Sekimizu K."/>
            <person name="Hirakawa H."/>
            <person name="Kuhara S."/>
            <person name="Goto S."/>
            <person name="Yabuzaki J."/>
            <person name="Kanehisa M."/>
            <person name="Yamashita A."/>
            <person name="Oshima K."/>
            <person name="Furuya K."/>
            <person name="Yoshino C."/>
            <person name="Shiba T."/>
            <person name="Hattori M."/>
            <person name="Ogasawara N."/>
            <person name="Hayashi H."/>
            <person name="Hiramatsu K."/>
        </authorList>
    </citation>
    <scope>NUCLEOTIDE SEQUENCE [LARGE SCALE GENOMIC DNA]</scope>
    <source>
        <strain>N315</strain>
    </source>
</reference>
<reference key="2">
    <citation type="journal article" date="2005" name="J. Microbiol. Methods">
        <title>Correlation of proteomic and transcriptomic profiles of Staphylococcus aureus during the post-exponential phase of growth.</title>
        <authorList>
            <person name="Scherl A."/>
            <person name="Francois P."/>
            <person name="Bento M."/>
            <person name="Deshusses J.M."/>
            <person name="Charbonnier Y."/>
            <person name="Converset V."/>
            <person name="Huyghe A."/>
            <person name="Walter N."/>
            <person name="Hoogland C."/>
            <person name="Appel R.D."/>
            <person name="Sanchez J.-C."/>
            <person name="Zimmermann-Ivol C.G."/>
            <person name="Corthals G.L."/>
            <person name="Hochstrasser D.F."/>
            <person name="Schrenzel J."/>
        </authorList>
    </citation>
    <scope>IDENTIFICATION BY MASS SPECTROMETRY</scope>
    <source>
        <strain>N315</strain>
    </source>
</reference>
<reference key="3">
    <citation type="submission" date="2007-10" db="UniProtKB">
        <title>Shotgun proteomic analysis of total and membrane protein extracts of S. aureus strain N315.</title>
        <authorList>
            <person name="Vaezzadeh A.R."/>
            <person name="Deshusses J."/>
            <person name="Lescuyer P."/>
            <person name="Hochstrasser D.F."/>
        </authorList>
    </citation>
    <scope>IDENTIFICATION BY MASS SPECTROMETRY [LARGE SCALE ANALYSIS]</scope>
    <source>
        <strain>N315</strain>
    </source>
</reference>
<organism>
    <name type="scientific">Staphylococcus aureus (strain N315)</name>
    <dbReference type="NCBI Taxonomy" id="158879"/>
    <lineage>
        <taxon>Bacteria</taxon>
        <taxon>Bacillati</taxon>
        <taxon>Bacillota</taxon>
        <taxon>Bacilli</taxon>
        <taxon>Bacillales</taxon>
        <taxon>Staphylococcaceae</taxon>
        <taxon>Staphylococcus</taxon>
    </lineage>
</organism>
<evidence type="ECO:0000255" key="1">
    <source>
        <dbReference type="HAMAP-Rule" id="MF_00328"/>
    </source>
</evidence>
<protein>
    <recommendedName>
        <fullName evidence="1">Guanylate kinase</fullName>
        <ecNumber evidence="1">2.7.4.8</ecNumber>
    </recommendedName>
    <alternativeName>
        <fullName evidence="1">GMP kinase</fullName>
    </alternativeName>
</protein>
<feature type="chain" id="PRO_0000170605" description="Guanylate kinase">
    <location>
        <begin position="1"/>
        <end position="207"/>
    </location>
</feature>
<feature type="domain" description="Guanylate kinase-like" evidence="1">
    <location>
        <begin position="6"/>
        <end position="185"/>
    </location>
</feature>
<feature type="binding site" evidence="1">
    <location>
        <begin position="13"/>
        <end position="20"/>
    </location>
    <ligand>
        <name>ATP</name>
        <dbReference type="ChEBI" id="CHEBI:30616"/>
    </ligand>
</feature>
<dbReference type="EC" id="2.7.4.8" evidence="1"/>
<dbReference type="EMBL" id="BA000018">
    <property type="protein sequence ID" value="BAB42304.1"/>
    <property type="molecule type" value="Genomic_DNA"/>
</dbReference>
<dbReference type="PIR" id="D89893">
    <property type="entry name" value="D89893"/>
</dbReference>
<dbReference type="RefSeq" id="WP_000368226.1">
    <property type="nucleotide sequence ID" value="NC_002745.2"/>
</dbReference>
<dbReference type="SMR" id="P99176"/>
<dbReference type="EnsemblBacteria" id="BAB42304">
    <property type="protein sequence ID" value="BAB42304"/>
    <property type="gene ID" value="BAB42304"/>
</dbReference>
<dbReference type="KEGG" id="sau:SA1052"/>
<dbReference type="HOGENOM" id="CLU_001715_1_2_9"/>
<dbReference type="GO" id="GO:0005829">
    <property type="term" value="C:cytosol"/>
    <property type="evidence" value="ECO:0007669"/>
    <property type="project" value="TreeGrafter"/>
</dbReference>
<dbReference type="GO" id="GO:0005524">
    <property type="term" value="F:ATP binding"/>
    <property type="evidence" value="ECO:0007669"/>
    <property type="project" value="UniProtKB-UniRule"/>
</dbReference>
<dbReference type="GO" id="GO:0004385">
    <property type="term" value="F:guanylate kinase activity"/>
    <property type="evidence" value="ECO:0007669"/>
    <property type="project" value="UniProtKB-UniRule"/>
</dbReference>
<dbReference type="CDD" id="cd00071">
    <property type="entry name" value="GMPK"/>
    <property type="match status" value="1"/>
</dbReference>
<dbReference type="FunFam" id="3.40.50.300:FF:000855">
    <property type="entry name" value="Guanylate kinase"/>
    <property type="match status" value="1"/>
</dbReference>
<dbReference type="FunFam" id="3.30.63.10:FF:000002">
    <property type="entry name" value="Guanylate kinase 1"/>
    <property type="match status" value="1"/>
</dbReference>
<dbReference type="Gene3D" id="3.30.63.10">
    <property type="entry name" value="Guanylate Kinase phosphate binding domain"/>
    <property type="match status" value="1"/>
</dbReference>
<dbReference type="Gene3D" id="3.40.50.300">
    <property type="entry name" value="P-loop containing nucleotide triphosphate hydrolases"/>
    <property type="match status" value="1"/>
</dbReference>
<dbReference type="HAMAP" id="MF_00328">
    <property type="entry name" value="Guanylate_kinase"/>
    <property type="match status" value="1"/>
</dbReference>
<dbReference type="InterPro" id="IPR008145">
    <property type="entry name" value="GK/Ca_channel_bsu"/>
</dbReference>
<dbReference type="InterPro" id="IPR008144">
    <property type="entry name" value="Guanylate_kin-like_dom"/>
</dbReference>
<dbReference type="InterPro" id="IPR017665">
    <property type="entry name" value="Guanylate_kinase"/>
</dbReference>
<dbReference type="InterPro" id="IPR020590">
    <property type="entry name" value="Guanylate_kinase_CS"/>
</dbReference>
<dbReference type="InterPro" id="IPR027417">
    <property type="entry name" value="P-loop_NTPase"/>
</dbReference>
<dbReference type="NCBIfam" id="TIGR03263">
    <property type="entry name" value="guanyl_kin"/>
    <property type="match status" value="1"/>
</dbReference>
<dbReference type="PANTHER" id="PTHR23117:SF13">
    <property type="entry name" value="GUANYLATE KINASE"/>
    <property type="match status" value="1"/>
</dbReference>
<dbReference type="PANTHER" id="PTHR23117">
    <property type="entry name" value="GUANYLATE KINASE-RELATED"/>
    <property type="match status" value="1"/>
</dbReference>
<dbReference type="Pfam" id="PF00625">
    <property type="entry name" value="Guanylate_kin"/>
    <property type="match status" value="1"/>
</dbReference>
<dbReference type="SMART" id="SM00072">
    <property type="entry name" value="GuKc"/>
    <property type="match status" value="1"/>
</dbReference>
<dbReference type="SUPFAM" id="SSF52540">
    <property type="entry name" value="P-loop containing nucleoside triphosphate hydrolases"/>
    <property type="match status" value="1"/>
</dbReference>
<dbReference type="PROSITE" id="PS00856">
    <property type="entry name" value="GUANYLATE_KINASE_1"/>
    <property type="match status" value="1"/>
</dbReference>
<dbReference type="PROSITE" id="PS50052">
    <property type="entry name" value="GUANYLATE_KINASE_2"/>
    <property type="match status" value="1"/>
</dbReference>
<sequence length="207" mass="24022">MDNEKGLLIVLSGPSGVGKGTVRKRIFEDPSTSYKYSISMTTRQMREGEVDGVDYFFKTRDAFEALIKDDQFIEYAEYVGNYYGTPVQYVKDTMDEGHDVFLEIEVEGAKQVRKKFPDALFIFLAPPSLDHLRERLVGRGTESNEKIQSRINEARKEVEMMNLYDYVVVNDEVELAKNRIQCIVEAEHLKRERVEAKYRKMILEAKK</sequence>
<gene>
    <name evidence="1" type="primary">gmk</name>
    <name type="ordered locus">SA1052</name>
</gene>
<proteinExistence type="evidence at protein level"/>
<comment type="function">
    <text evidence="1">Essential for recycling GMP and indirectly, cGMP.</text>
</comment>
<comment type="catalytic activity">
    <reaction evidence="1">
        <text>GMP + ATP = GDP + ADP</text>
        <dbReference type="Rhea" id="RHEA:20780"/>
        <dbReference type="ChEBI" id="CHEBI:30616"/>
        <dbReference type="ChEBI" id="CHEBI:58115"/>
        <dbReference type="ChEBI" id="CHEBI:58189"/>
        <dbReference type="ChEBI" id="CHEBI:456216"/>
        <dbReference type="EC" id="2.7.4.8"/>
    </reaction>
</comment>
<comment type="subcellular location">
    <subcellularLocation>
        <location evidence="1">Cytoplasm</location>
    </subcellularLocation>
</comment>
<comment type="similarity">
    <text evidence="1">Belongs to the guanylate kinase family.</text>
</comment>
<keyword id="KW-0067">ATP-binding</keyword>
<keyword id="KW-0963">Cytoplasm</keyword>
<keyword id="KW-0418">Kinase</keyword>
<keyword id="KW-0547">Nucleotide-binding</keyword>
<keyword id="KW-0808">Transferase</keyword>
<name>KGUA_STAAN</name>
<accession>P99176</accession>
<accession>Q99UQ9</accession>